<gene>
    <name type="primary">cse15</name>
    <name type="synonym">yknT</name>
    <name type="ordered locus">BSU14250</name>
</gene>
<reference key="1">
    <citation type="journal article" date="1997" name="J. Bacteriol.">
        <title>cse15, cse60, and csk22 are new members of mother-cell-specific sporulation regulons in Bacillus subtilis.</title>
        <authorList>
            <person name="Henriques A.O."/>
            <person name="Bryan E.M."/>
            <person name="Beall B.W."/>
            <person name="Moran C.P. Jr."/>
        </authorList>
    </citation>
    <scope>NUCLEOTIDE SEQUENCE [GENOMIC DNA]</scope>
    <scope>INDUCTION</scope>
    <source>
        <strain>168</strain>
    </source>
</reference>
<reference key="2">
    <citation type="journal article" date="1997" name="Nature">
        <title>The complete genome sequence of the Gram-positive bacterium Bacillus subtilis.</title>
        <authorList>
            <person name="Kunst F."/>
            <person name="Ogasawara N."/>
            <person name="Moszer I."/>
            <person name="Albertini A.M."/>
            <person name="Alloni G."/>
            <person name="Azevedo V."/>
            <person name="Bertero M.G."/>
            <person name="Bessieres P."/>
            <person name="Bolotin A."/>
            <person name="Borchert S."/>
            <person name="Borriss R."/>
            <person name="Boursier L."/>
            <person name="Brans A."/>
            <person name="Braun M."/>
            <person name="Brignell S.C."/>
            <person name="Bron S."/>
            <person name="Brouillet S."/>
            <person name="Bruschi C.V."/>
            <person name="Caldwell B."/>
            <person name="Capuano V."/>
            <person name="Carter N.M."/>
            <person name="Choi S.-K."/>
            <person name="Codani J.-J."/>
            <person name="Connerton I.F."/>
            <person name="Cummings N.J."/>
            <person name="Daniel R.A."/>
            <person name="Denizot F."/>
            <person name="Devine K.M."/>
            <person name="Duesterhoeft A."/>
            <person name="Ehrlich S.D."/>
            <person name="Emmerson P.T."/>
            <person name="Entian K.-D."/>
            <person name="Errington J."/>
            <person name="Fabret C."/>
            <person name="Ferrari E."/>
            <person name="Foulger D."/>
            <person name="Fritz C."/>
            <person name="Fujita M."/>
            <person name="Fujita Y."/>
            <person name="Fuma S."/>
            <person name="Galizzi A."/>
            <person name="Galleron N."/>
            <person name="Ghim S.-Y."/>
            <person name="Glaser P."/>
            <person name="Goffeau A."/>
            <person name="Golightly E.J."/>
            <person name="Grandi G."/>
            <person name="Guiseppi G."/>
            <person name="Guy B.J."/>
            <person name="Haga K."/>
            <person name="Haiech J."/>
            <person name="Harwood C.R."/>
            <person name="Henaut A."/>
            <person name="Hilbert H."/>
            <person name="Holsappel S."/>
            <person name="Hosono S."/>
            <person name="Hullo M.-F."/>
            <person name="Itaya M."/>
            <person name="Jones L.-M."/>
            <person name="Joris B."/>
            <person name="Karamata D."/>
            <person name="Kasahara Y."/>
            <person name="Klaerr-Blanchard M."/>
            <person name="Klein C."/>
            <person name="Kobayashi Y."/>
            <person name="Koetter P."/>
            <person name="Koningstein G."/>
            <person name="Krogh S."/>
            <person name="Kumano M."/>
            <person name="Kurita K."/>
            <person name="Lapidus A."/>
            <person name="Lardinois S."/>
            <person name="Lauber J."/>
            <person name="Lazarevic V."/>
            <person name="Lee S.-M."/>
            <person name="Levine A."/>
            <person name="Liu H."/>
            <person name="Masuda S."/>
            <person name="Mauel C."/>
            <person name="Medigue C."/>
            <person name="Medina N."/>
            <person name="Mellado R.P."/>
            <person name="Mizuno M."/>
            <person name="Moestl D."/>
            <person name="Nakai S."/>
            <person name="Noback M."/>
            <person name="Noone D."/>
            <person name="O'Reilly M."/>
            <person name="Ogawa K."/>
            <person name="Ogiwara A."/>
            <person name="Oudega B."/>
            <person name="Park S.-H."/>
            <person name="Parro V."/>
            <person name="Pohl T.M."/>
            <person name="Portetelle D."/>
            <person name="Porwollik S."/>
            <person name="Prescott A.M."/>
            <person name="Presecan E."/>
            <person name="Pujic P."/>
            <person name="Purnelle B."/>
            <person name="Rapoport G."/>
            <person name="Rey M."/>
            <person name="Reynolds S."/>
            <person name="Rieger M."/>
            <person name="Rivolta C."/>
            <person name="Rocha E."/>
            <person name="Roche B."/>
            <person name="Rose M."/>
            <person name="Sadaie Y."/>
            <person name="Sato T."/>
            <person name="Scanlan E."/>
            <person name="Schleich S."/>
            <person name="Schroeter R."/>
            <person name="Scoffone F."/>
            <person name="Sekiguchi J."/>
            <person name="Sekowska A."/>
            <person name="Seror S.J."/>
            <person name="Serror P."/>
            <person name="Shin B.-S."/>
            <person name="Soldo B."/>
            <person name="Sorokin A."/>
            <person name="Tacconi E."/>
            <person name="Takagi T."/>
            <person name="Takahashi H."/>
            <person name="Takemaru K."/>
            <person name="Takeuchi M."/>
            <person name="Tamakoshi A."/>
            <person name="Tanaka T."/>
            <person name="Terpstra P."/>
            <person name="Tognoni A."/>
            <person name="Tosato V."/>
            <person name="Uchiyama S."/>
            <person name="Vandenbol M."/>
            <person name="Vannier F."/>
            <person name="Vassarotti A."/>
            <person name="Viari A."/>
            <person name="Wambutt R."/>
            <person name="Wedler E."/>
            <person name="Wedler H."/>
            <person name="Weitzenegger T."/>
            <person name="Winters P."/>
            <person name="Wipat A."/>
            <person name="Yamamoto H."/>
            <person name="Yamane K."/>
            <person name="Yasumoto K."/>
            <person name="Yata K."/>
            <person name="Yoshida K."/>
            <person name="Yoshikawa H.-F."/>
            <person name="Zumstein E."/>
            <person name="Yoshikawa H."/>
            <person name="Danchin A."/>
        </authorList>
    </citation>
    <scope>NUCLEOTIDE SEQUENCE [LARGE SCALE GENOMIC DNA]</scope>
    <source>
        <strain>168</strain>
    </source>
</reference>
<reference key="3">
    <citation type="submission" date="1997-07" db="EMBL/GenBank/DDBJ databases">
        <title>Sequence analysis of the mobA-ampS region of the Bacillus subtilis chromosome.</title>
        <authorList>
            <person name="Caldwell R.M."/>
            <person name="Ferrari E."/>
        </authorList>
    </citation>
    <scope>NUCLEOTIDE SEQUENCE [GENOMIC DNA] OF 1-157</scope>
    <source>
        <strain>168</strain>
    </source>
</reference>
<reference key="4">
    <citation type="submission" date="1997-11" db="EMBL/GenBank/DDBJ databases">
        <title>Sequence of the Bacillus subtilis chromosome from ykuA to cse-15.</title>
        <authorList>
            <person name="Scanlan E."/>
            <person name="Devine K.M."/>
        </authorList>
    </citation>
    <scope>NUCLEOTIDE SEQUENCE [GENOMIC DNA] OF 135-321</scope>
    <source>
        <strain>168</strain>
    </source>
</reference>
<dbReference type="EMBL" id="U72072">
    <property type="protein sequence ID" value="AAB49968.1"/>
    <property type="molecule type" value="Genomic_DNA"/>
</dbReference>
<dbReference type="EMBL" id="AL009126">
    <property type="protein sequence ID" value="CAB13298.1"/>
    <property type="molecule type" value="Genomic_DNA"/>
</dbReference>
<dbReference type="EMBL" id="AF012285">
    <property type="protein sequence ID" value="AAC24911.1"/>
    <property type="molecule type" value="Genomic_DNA"/>
</dbReference>
<dbReference type="EMBL" id="AJ222587">
    <property type="protein sequence ID" value="CAA10887.1"/>
    <property type="molecule type" value="Genomic_DNA"/>
</dbReference>
<dbReference type="PIR" id="G69857">
    <property type="entry name" value="G69857"/>
</dbReference>
<dbReference type="RefSeq" id="WP_003245018.1">
    <property type="nucleotide sequence ID" value="NZ_OZ025638.1"/>
</dbReference>
<dbReference type="SMR" id="O31700"/>
<dbReference type="FunCoup" id="O31700">
    <property type="interactions" value="6"/>
</dbReference>
<dbReference type="STRING" id="224308.BSU14250"/>
<dbReference type="PaxDb" id="224308-BSU14250"/>
<dbReference type="EnsemblBacteria" id="CAB13298">
    <property type="protein sequence ID" value="CAB13298"/>
    <property type="gene ID" value="BSU_14250"/>
</dbReference>
<dbReference type="GeneID" id="938787"/>
<dbReference type="KEGG" id="bsu:BSU14250"/>
<dbReference type="PATRIC" id="fig|224308.179.peg.1555"/>
<dbReference type="eggNOG" id="ENOG5030CEZ">
    <property type="taxonomic scope" value="Bacteria"/>
</dbReference>
<dbReference type="InParanoid" id="O31700"/>
<dbReference type="OrthoDB" id="2938173at2"/>
<dbReference type="BioCyc" id="BSUB:BSU14250-MONOMER"/>
<dbReference type="Proteomes" id="UP000001570">
    <property type="component" value="Chromosome"/>
</dbReference>
<dbReference type="GO" id="GO:0030435">
    <property type="term" value="P:sporulation resulting in formation of a cellular spore"/>
    <property type="evidence" value="ECO:0007669"/>
    <property type="project" value="UniProtKB-KW"/>
</dbReference>
<evidence type="ECO:0000255" key="1"/>
<evidence type="ECO:0000256" key="2">
    <source>
        <dbReference type="SAM" id="MobiDB-lite"/>
    </source>
</evidence>
<evidence type="ECO:0000269" key="3">
    <source>
    </source>
</evidence>
<evidence type="ECO:0000305" key="4"/>
<comment type="induction">
    <text evidence="3">Transcription starts around hour 2 of sporulation and requires sigma-E.</text>
</comment>
<keyword id="KW-0175">Coiled coil</keyword>
<keyword id="KW-1185">Reference proteome</keyword>
<keyword id="KW-0749">Sporulation</keyword>
<proteinExistence type="evidence at transcript level"/>
<sequence>MKRSGPFFHDVSQENLYLKSELSRCHKLISELEASYFHQKNNKLLKENTDMKEKLQQLSAELTHMSTKEKHASHTSQTLHQIRAELLDKIVVLQELLSAETYKRRAEIEEKHKLHIAKVKIEEENKNLHKRISELQASIEQEQNALLQAKQQAELIKAENGRLKEQMVEKEYQLKHIKIEVDHMKDRIIETKERLLDIEKTKEKLFHETIISYKRQLDESDAWIASHFADIDGGTKQKEKTEEEAPAAYAQPNHVETILEDVTKQIHVLQKQLAHAQSSDQAKSHTIEELKNRAAEEKPYQKWVYKLNLEKENKPSQKKPQ</sequence>
<name>CSE15_BACSU</name>
<protein>
    <recommendedName>
        <fullName>Sporulation protein cse15</fullName>
    </recommendedName>
</protein>
<feature type="chain" id="PRO_0000367919" description="Sporulation protein cse15">
    <location>
        <begin position="1"/>
        <end position="321"/>
    </location>
</feature>
<feature type="region of interest" description="Disordered" evidence="2">
    <location>
        <begin position="234"/>
        <end position="253"/>
    </location>
</feature>
<feature type="region of interest" description="Disordered" evidence="2">
    <location>
        <begin position="274"/>
        <end position="293"/>
    </location>
</feature>
<feature type="coiled-coil region" evidence="1">
    <location>
        <begin position="37"/>
        <end position="70"/>
    </location>
</feature>
<feature type="coiled-coil region" evidence="1">
    <location>
        <begin position="108"/>
        <end position="205"/>
    </location>
</feature>
<feature type="compositionally biased region" description="Basic and acidic residues" evidence="2">
    <location>
        <begin position="234"/>
        <end position="243"/>
    </location>
</feature>
<feature type="compositionally biased region" description="Basic and acidic residues" evidence="2">
    <location>
        <begin position="282"/>
        <end position="293"/>
    </location>
</feature>
<feature type="sequence conflict" description="In Ref. 1; AAB49968." evidence="4" ref="1">
    <original>Q</original>
    <variation>E</variation>
    <location>
        <position position="143"/>
    </location>
</feature>
<feature type="sequence conflict" description="In Ref. 1; AAB49968." evidence="4" ref="1">
    <original>AYA</original>
    <variation>GLP</variation>
    <location>
        <begin position="248"/>
        <end position="250"/>
    </location>
</feature>
<accession>O31700</accession>
<accession>P71030</accession>
<accession>Q7B2R4</accession>
<accession>Q7BVS5</accession>
<organism>
    <name type="scientific">Bacillus subtilis (strain 168)</name>
    <dbReference type="NCBI Taxonomy" id="224308"/>
    <lineage>
        <taxon>Bacteria</taxon>
        <taxon>Bacillati</taxon>
        <taxon>Bacillota</taxon>
        <taxon>Bacilli</taxon>
        <taxon>Bacillales</taxon>
        <taxon>Bacillaceae</taxon>
        <taxon>Bacillus</taxon>
    </lineage>
</organism>